<sequence>MMRKLAILSVSSFLFVEALFQEYQCYGSSSNTRVLNELNYDNAGTNLYNELEMNYYGKQENWYSLKKNSRSLGENDDGNNEDNEKLRKPKHKKLKQPADGNPDPNANPNVDPNANPNVDPNANPNVDPNANPNANPNANPNANPNANPNANPNANPNANPNANPNANPNANPNANPNANPNANPNANPNANPNANPNVDPNANPNANPNANPNANPNANPNANPNANPNANPNANPNANPNANPNANPNANPNANPNANPNANPNANPNANPNKNNQGNGQGHNMPNDPNRNVDENANANSAVKNNNNEEPSDKHIKEYLNKIQNSLSTEWSPCSVTCGNGIQVRIKPGSANKPKDELDYANDIEKKICKMEKCSSVFNVVNSSIGLIMVLSFLFLN</sequence>
<organism>
    <name type="scientific">Plasmodium falciparum (isolate NF54)</name>
    <dbReference type="NCBI Taxonomy" id="5843"/>
    <lineage>
        <taxon>Eukaryota</taxon>
        <taxon>Sar</taxon>
        <taxon>Alveolata</taxon>
        <taxon>Apicomplexa</taxon>
        <taxon>Aconoidasida</taxon>
        <taxon>Haemosporida</taxon>
        <taxon>Plasmodiidae</taxon>
        <taxon>Plasmodium</taxon>
        <taxon>Plasmodium (Laverania)</taxon>
    </lineage>
</organism>
<feature type="signal peptide" evidence="3">
    <location>
        <begin position="1"/>
        <end position="18"/>
    </location>
</feature>
<feature type="chain" id="PRO_0000024527" description="Circumsporozoite protein" evidence="3">
    <location>
        <begin position="19"/>
        <end position="374"/>
    </location>
</feature>
<feature type="chain" id="PRO_0000455488" description="Circumsporozoite protein C-terminus" evidence="1">
    <location>
        <begin status="unknown"/>
        <end position="374"/>
    </location>
</feature>
<feature type="propeptide" id="PRO_0000455489" description="Removed in mature form" evidence="3">
    <location>
        <begin position="375"/>
        <end position="397"/>
    </location>
</feature>
<feature type="repeat" description="1" evidence="14">
    <location>
        <begin position="105"/>
        <end position="108"/>
    </location>
</feature>
<feature type="repeat" description="2" evidence="14">
    <location>
        <begin position="109"/>
        <end position="112"/>
    </location>
</feature>
<feature type="repeat" description="3" evidence="14">
    <location>
        <begin position="113"/>
        <end position="116"/>
    </location>
</feature>
<feature type="repeat" description="4" evidence="14">
    <location>
        <begin position="117"/>
        <end position="120"/>
    </location>
</feature>
<feature type="repeat" description="5" evidence="14">
    <location>
        <begin position="121"/>
        <end position="124"/>
    </location>
</feature>
<feature type="repeat" description="6" evidence="14">
    <location>
        <begin position="125"/>
        <end position="128"/>
    </location>
</feature>
<feature type="repeat" description="7" evidence="14">
    <location>
        <begin position="129"/>
        <end position="132"/>
    </location>
</feature>
<feature type="repeat" description="8" evidence="14">
    <location>
        <begin position="133"/>
        <end position="136"/>
    </location>
</feature>
<feature type="repeat" description="9" evidence="14">
    <location>
        <begin position="137"/>
        <end position="140"/>
    </location>
</feature>
<feature type="repeat" description="10" evidence="14">
    <location>
        <begin position="141"/>
        <end position="144"/>
    </location>
</feature>
<feature type="repeat" description="11" evidence="14">
    <location>
        <begin position="145"/>
        <end position="148"/>
    </location>
</feature>
<feature type="repeat" description="12" evidence="14">
    <location>
        <begin position="149"/>
        <end position="152"/>
    </location>
</feature>
<feature type="repeat" description="13" evidence="14">
    <location>
        <begin position="153"/>
        <end position="156"/>
    </location>
</feature>
<feature type="repeat" description="14" evidence="14">
    <location>
        <begin position="157"/>
        <end position="160"/>
    </location>
</feature>
<feature type="repeat" description="15" evidence="14">
    <location>
        <begin position="161"/>
        <end position="164"/>
    </location>
</feature>
<feature type="repeat" description="16" evidence="14">
    <location>
        <begin position="165"/>
        <end position="168"/>
    </location>
</feature>
<feature type="repeat" description="17" evidence="14">
    <location>
        <begin position="169"/>
        <end position="172"/>
    </location>
</feature>
<feature type="repeat" description="18" evidence="14">
    <location>
        <begin position="173"/>
        <end position="176"/>
    </location>
</feature>
<feature type="repeat" description="19" evidence="14">
    <location>
        <begin position="177"/>
        <end position="180"/>
    </location>
</feature>
<feature type="repeat" description="20" evidence="14">
    <location>
        <begin position="181"/>
        <end position="184"/>
    </location>
</feature>
<feature type="repeat" description="21" evidence="14">
    <location>
        <begin position="185"/>
        <end position="188"/>
    </location>
</feature>
<feature type="repeat" description="22" evidence="14">
    <location>
        <begin position="189"/>
        <end position="192"/>
    </location>
</feature>
<feature type="repeat" description="23" evidence="14">
    <location>
        <begin position="193"/>
        <end position="196"/>
    </location>
</feature>
<feature type="repeat" description="24" evidence="14">
    <location>
        <begin position="197"/>
        <end position="200"/>
    </location>
</feature>
<feature type="repeat" description="25" evidence="14">
    <location>
        <begin position="201"/>
        <end position="204"/>
    </location>
</feature>
<feature type="repeat" description="26" evidence="14">
    <location>
        <begin position="205"/>
        <end position="208"/>
    </location>
</feature>
<feature type="repeat" description="27" evidence="14">
    <location>
        <begin position="209"/>
        <end position="212"/>
    </location>
</feature>
<feature type="repeat" description="28" evidence="14">
    <location>
        <begin position="213"/>
        <end position="216"/>
    </location>
</feature>
<feature type="repeat" description="29" evidence="14">
    <location>
        <begin position="217"/>
        <end position="220"/>
    </location>
</feature>
<feature type="repeat" description="30" evidence="14">
    <location>
        <begin position="221"/>
        <end position="224"/>
    </location>
</feature>
<feature type="repeat" description="31" evidence="14">
    <location>
        <begin position="225"/>
        <end position="228"/>
    </location>
</feature>
<feature type="repeat" description="32" evidence="14">
    <location>
        <begin position="229"/>
        <end position="232"/>
    </location>
</feature>
<feature type="repeat" description="33" evidence="14">
    <location>
        <begin position="233"/>
        <end position="236"/>
    </location>
</feature>
<feature type="repeat" description="34" evidence="14">
    <location>
        <begin position="237"/>
        <end position="240"/>
    </location>
</feature>
<feature type="repeat" description="35" evidence="14">
    <location>
        <begin position="241"/>
        <end position="244"/>
    </location>
</feature>
<feature type="repeat" description="36" evidence="14">
    <location>
        <begin position="245"/>
        <end position="248"/>
    </location>
</feature>
<feature type="repeat" description="37" evidence="14">
    <location>
        <begin position="249"/>
        <end position="252"/>
    </location>
</feature>
<feature type="repeat" description="38" evidence="14">
    <location>
        <begin position="253"/>
        <end position="256"/>
    </location>
</feature>
<feature type="repeat" description="39" evidence="14">
    <location>
        <begin position="257"/>
        <end position="260"/>
    </location>
</feature>
<feature type="repeat" description="40" evidence="14">
    <location>
        <begin position="261"/>
        <end position="264"/>
    </location>
</feature>
<feature type="repeat" description="41" evidence="14">
    <location>
        <begin position="265"/>
        <end position="268"/>
    </location>
</feature>
<feature type="repeat" description="42" evidence="14">
    <location>
        <begin position="269"/>
        <end position="272"/>
    </location>
</feature>
<feature type="domain" description="TSP type-1" evidence="4">
    <location>
        <begin position="322"/>
        <end position="375"/>
    </location>
</feature>
<feature type="region of interest" description="Disordered" evidence="5">
    <location>
        <begin position="69"/>
        <end position="313"/>
    </location>
</feature>
<feature type="region of interest" description="Required for the binding to heparan sulfate proteoglycans (HSPGs) on the surface of host hepatocytes" evidence="2">
    <location>
        <begin position="85"/>
        <end position="92"/>
    </location>
</feature>
<feature type="region of interest" description="Region I; contains the proteolytic cleavage site" evidence="1">
    <location>
        <begin position="93"/>
        <end position="97"/>
    </location>
</feature>
<feature type="region of interest" description="42 X 4 AA tandem repeats of N-[AV]-[ND]-P" evidence="14">
    <location>
        <begin position="105"/>
        <end position="272"/>
    </location>
</feature>
<feature type="compositionally biased region" description="Low complexity" evidence="5">
    <location>
        <begin position="101"/>
        <end position="273"/>
    </location>
</feature>
<feature type="compositionally biased region" description="Polar residues" evidence="5">
    <location>
        <begin position="274"/>
        <end position="290"/>
    </location>
</feature>
<feature type="compositionally biased region" description="Low complexity" evidence="5">
    <location>
        <begin position="295"/>
        <end position="309"/>
    </location>
</feature>
<feature type="lipid moiety-binding region" description="GPI-anchor amidated cysteine" evidence="3">
    <location>
        <position position="374"/>
    </location>
</feature>
<feature type="glycosylation site" description="O-linked (Fuc) threonine" evidence="15 16">
    <location>
        <position position="337"/>
    </location>
</feature>
<feature type="disulfide bond" evidence="2">
    <location>
        <begin position="334"/>
        <end position="369"/>
    </location>
</feature>
<feature type="disulfide bond" evidence="2">
    <location>
        <begin position="338"/>
        <end position="374"/>
    </location>
</feature>
<feature type="sequence conflict" description="In Ref. 4; AAA29527." evidence="13" ref="4">
    <original>A</original>
    <variation>ANPNANPNA</variation>
    <location>
        <position position="194"/>
    </location>
</feature>
<feature type="strand" evidence="34">
    <location>
        <begin position="105"/>
        <end position="107"/>
    </location>
</feature>
<feature type="strand" evidence="30">
    <location>
        <begin position="108"/>
        <end position="110"/>
    </location>
</feature>
<feature type="helix" evidence="32">
    <location>
        <begin position="120"/>
        <end position="122"/>
    </location>
</feature>
<feature type="strand" evidence="32">
    <location>
        <begin position="124"/>
        <end position="126"/>
    </location>
</feature>
<feature type="strand" evidence="31">
    <location>
        <begin position="196"/>
        <end position="198"/>
    </location>
</feature>
<feature type="helix" evidence="33">
    <location>
        <begin position="264"/>
        <end position="266"/>
    </location>
</feature>
<feature type="helix" evidence="29">
    <location>
        <begin position="313"/>
        <end position="322"/>
    </location>
</feature>
<feature type="turn" evidence="29">
    <location>
        <begin position="323"/>
        <end position="326"/>
    </location>
</feature>
<feature type="strand" evidence="29">
    <location>
        <begin position="328"/>
        <end position="330"/>
    </location>
</feature>
<feature type="strand" evidence="29">
    <location>
        <begin position="337"/>
        <end position="346"/>
    </location>
</feature>
<feature type="helix" evidence="29">
    <location>
        <begin position="348"/>
        <end position="350"/>
    </location>
</feature>
<feature type="helix" evidence="29">
    <location>
        <begin position="355"/>
        <end position="357"/>
    </location>
</feature>
<feature type="helix" evidence="29">
    <location>
        <begin position="360"/>
        <end position="363"/>
    </location>
</feature>
<feature type="strand" evidence="29">
    <location>
        <begin position="364"/>
        <end position="372"/>
    </location>
</feature>
<dbReference type="EMBL" id="X15363">
    <property type="protein sequence ID" value="CAA33421.1"/>
    <property type="molecule type" value="Genomic_DNA"/>
</dbReference>
<dbReference type="EMBL" id="M83886">
    <property type="protein sequence ID" value="AAA29521.1"/>
    <property type="molecule type" value="Genomic_DNA"/>
</dbReference>
<dbReference type="EMBL" id="M22982">
    <property type="protein sequence ID" value="AAA29527.1"/>
    <property type="molecule type" value="Genomic_DNA"/>
</dbReference>
<dbReference type="PIR" id="S05428">
    <property type="entry name" value="S05428"/>
</dbReference>
<dbReference type="PDB" id="6B0S">
    <property type="method" value="X-ray"/>
    <property type="resolution" value="1.95 A"/>
    <property type="chains" value="C=310-374"/>
</dbReference>
<dbReference type="PDB" id="6O23">
    <property type="method" value="X-ray"/>
    <property type="resolution" value="2.00 A"/>
    <property type="chains" value="E=253-272"/>
</dbReference>
<dbReference type="PDB" id="6O24">
    <property type="method" value="X-ray"/>
    <property type="resolution" value="1.40 A"/>
    <property type="chains" value="I=261-272"/>
</dbReference>
<dbReference type="PDB" id="6O25">
    <property type="method" value="X-ray"/>
    <property type="resolution" value="2.90 A"/>
    <property type="chains" value="D/H/L=261-272"/>
</dbReference>
<dbReference type="PDB" id="6O26">
    <property type="method" value="X-ray"/>
    <property type="resolution" value="1.80 A"/>
    <property type="chains" value="C=289-302"/>
</dbReference>
<dbReference type="PDB" id="6O28">
    <property type="method" value="X-ray"/>
    <property type="resolution" value="1.93 A"/>
    <property type="chains" value="E/F=95-109"/>
</dbReference>
<dbReference type="PDB" id="6O29">
    <property type="method" value="X-ray"/>
    <property type="resolution" value="2.40 A"/>
    <property type="chains" value="C/D=101-116"/>
</dbReference>
<dbReference type="PDB" id="6O2A">
    <property type="method" value="X-ray"/>
    <property type="resolution" value="2.15 A"/>
    <property type="chains" value="F/G/K/L=193-204"/>
</dbReference>
<dbReference type="PDB" id="6O2B">
    <property type="method" value="X-ray"/>
    <property type="resolution" value="2.10 A"/>
    <property type="chains" value="F/G/K/L=117-128"/>
</dbReference>
<dbReference type="PDB" id="6O2C">
    <property type="method" value="X-ray"/>
    <property type="resolution" value="2.02 A"/>
    <property type="chains" value="C=261-272"/>
</dbReference>
<dbReference type="PDB" id="6ULE">
    <property type="method" value="X-ray"/>
    <property type="resolution" value="2.55 A"/>
    <property type="chains" value="I=253-272"/>
</dbReference>
<dbReference type="PDB" id="6ULF">
    <property type="method" value="X-ray"/>
    <property type="resolution" value="1.70 A"/>
    <property type="chains" value="P=193-204"/>
</dbReference>
<dbReference type="PDB" id="6VLN">
    <property type="method" value="X-ray"/>
    <property type="resolution" value="1.63 A"/>
    <property type="chains" value="P=117-128"/>
</dbReference>
<dbReference type="PDB" id="8F9E">
    <property type="method" value="X-ray"/>
    <property type="resolution" value="2.95 A"/>
    <property type="chains" value="C/P=95-109"/>
</dbReference>
<dbReference type="PDB" id="8F9V">
    <property type="method" value="X-ray"/>
    <property type="resolution" value="2.25 A"/>
    <property type="chains" value="M/N/O/P=95-109"/>
</dbReference>
<dbReference type="PDB" id="8FA7">
    <property type="method" value="X-ray"/>
    <property type="resolution" value="1.80 A"/>
    <property type="chains" value="P=95-109"/>
</dbReference>
<dbReference type="PDB" id="8FAN">
    <property type="method" value="X-ray"/>
    <property type="resolution" value="2.90 A"/>
    <property type="chains" value="P/Q/R=95-109"/>
</dbReference>
<dbReference type="PDB" id="8FB5">
    <property type="method" value="X-ray"/>
    <property type="resolution" value="2.90 A"/>
    <property type="chains" value="I/J/K/O=95-109"/>
</dbReference>
<dbReference type="PDB" id="8FB6">
    <property type="method" value="X-ray"/>
    <property type="resolution" value="2.15 A"/>
    <property type="chains" value="P=95-109"/>
</dbReference>
<dbReference type="PDB" id="8FB8">
    <property type="method" value="X-ray"/>
    <property type="resolution" value="1.69 A"/>
    <property type="chains" value="P=95-109"/>
</dbReference>
<dbReference type="PDB" id="8FDC">
    <property type="method" value="X-ray"/>
    <property type="resolution" value="1.80 A"/>
    <property type="chains" value="P=95-109"/>
</dbReference>
<dbReference type="PDB" id="8OIL">
    <property type="method" value="Other"/>
    <property type="chains" value="A=277-384"/>
</dbReference>
<dbReference type="PDBsum" id="6B0S"/>
<dbReference type="PDBsum" id="6O23"/>
<dbReference type="PDBsum" id="6O24"/>
<dbReference type="PDBsum" id="6O25"/>
<dbReference type="PDBsum" id="6O26"/>
<dbReference type="PDBsum" id="6O28"/>
<dbReference type="PDBsum" id="6O29"/>
<dbReference type="PDBsum" id="6O2A"/>
<dbReference type="PDBsum" id="6O2B"/>
<dbReference type="PDBsum" id="6O2C"/>
<dbReference type="PDBsum" id="6ULE"/>
<dbReference type="PDBsum" id="6ULF"/>
<dbReference type="PDBsum" id="6VLN"/>
<dbReference type="PDBsum" id="8F9E"/>
<dbReference type="PDBsum" id="8F9V"/>
<dbReference type="PDBsum" id="8FA7"/>
<dbReference type="PDBsum" id="8FAN"/>
<dbReference type="PDBsum" id="8FB5"/>
<dbReference type="PDBsum" id="8FB6"/>
<dbReference type="PDBsum" id="8FB8"/>
<dbReference type="PDBsum" id="8FDC"/>
<dbReference type="PDBsum" id="8OIL"/>
<dbReference type="SASBDB" id="P19597"/>
<dbReference type="SMR" id="P19597"/>
<dbReference type="GlyCosmos" id="P19597">
    <property type="glycosylation" value="1 site, No reported glycans"/>
</dbReference>
<dbReference type="iPTMnet" id="P19597"/>
<dbReference type="ABCD" id="P19597">
    <property type="antibodies" value="8 sequenced antibodies"/>
</dbReference>
<dbReference type="VEuPathDB" id="PlasmoDB:PfNF54_030009700"/>
<dbReference type="GO" id="GO:0005737">
    <property type="term" value="C:cytoplasm"/>
    <property type="evidence" value="ECO:0007669"/>
    <property type="project" value="UniProtKB-SubCell"/>
</dbReference>
<dbReference type="GO" id="GO:0009897">
    <property type="term" value="C:external side of plasma membrane"/>
    <property type="evidence" value="ECO:0000314"/>
    <property type="project" value="UniProtKB"/>
</dbReference>
<dbReference type="GO" id="GO:0085017">
    <property type="term" value="P:entry into host cell by a symbiont-containing vacuole"/>
    <property type="evidence" value="ECO:0000315"/>
    <property type="project" value="UniProtKB"/>
</dbReference>
<dbReference type="Gene3D" id="2.20.100.10">
    <property type="entry name" value="Thrombospondin type-1 (TSP1) repeat"/>
    <property type="match status" value="1"/>
</dbReference>
<dbReference type="InterPro" id="IPR003067">
    <property type="entry name" value="Crcmsprzoite"/>
</dbReference>
<dbReference type="InterPro" id="IPR051860">
    <property type="entry name" value="Plasmodium_CSP_Invasion"/>
</dbReference>
<dbReference type="InterPro" id="IPR000884">
    <property type="entry name" value="TSP1_rpt"/>
</dbReference>
<dbReference type="InterPro" id="IPR036383">
    <property type="entry name" value="TSP1_rpt_sf"/>
</dbReference>
<dbReference type="PANTHER" id="PTHR44826">
    <property type="entry name" value="SPORE COAT PROTEIN SP85"/>
    <property type="match status" value="1"/>
</dbReference>
<dbReference type="PANTHER" id="PTHR44826:SF3">
    <property type="entry name" value="SPORE COAT PROTEIN SP85"/>
    <property type="match status" value="1"/>
</dbReference>
<dbReference type="Pfam" id="PF00090">
    <property type="entry name" value="TSP_1"/>
    <property type="match status" value="1"/>
</dbReference>
<dbReference type="PRINTS" id="PR01303">
    <property type="entry name" value="CRCMSPRZOITE"/>
</dbReference>
<dbReference type="SMART" id="SM00209">
    <property type="entry name" value="TSP1"/>
    <property type="match status" value="1"/>
</dbReference>
<dbReference type="SUPFAM" id="SSF82895">
    <property type="entry name" value="TSP-1 type 1 repeat"/>
    <property type="match status" value="1"/>
</dbReference>
<dbReference type="PROSITE" id="PS50092">
    <property type="entry name" value="TSP1"/>
    <property type="match status" value="1"/>
</dbReference>
<accession>P19597</accession>
<accession>Q25798</accession>
<name>CSP_PLAFO</name>
<gene>
    <name evidence="12" type="primary">CSP</name>
</gene>
<evidence type="ECO:0000250" key="1">
    <source>
        <dbReference type="UniProtKB" id="P23093"/>
    </source>
</evidence>
<evidence type="ECO:0000250" key="2">
    <source>
        <dbReference type="UniProtKB" id="Q7K740"/>
    </source>
</evidence>
<evidence type="ECO:0000255" key="3"/>
<evidence type="ECO:0000255" key="4">
    <source>
        <dbReference type="PROSITE-ProRule" id="PRU00210"/>
    </source>
</evidence>
<evidence type="ECO:0000256" key="5">
    <source>
        <dbReference type="SAM" id="MobiDB-lite"/>
    </source>
</evidence>
<evidence type="ECO:0000269" key="6">
    <source>
    </source>
</evidence>
<evidence type="ECO:0000269" key="7">
    <source>
    </source>
</evidence>
<evidence type="ECO:0000269" key="8">
    <source>
    </source>
</evidence>
<evidence type="ECO:0000269" key="9">
    <source>
    </source>
</evidence>
<evidence type="ECO:0000269" key="10">
    <source>
    </source>
</evidence>
<evidence type="ECO:0000303" key="11">
    <source>
    </source>
</evidence>
<evidence type="ECO:0000303" key="12">
    <source>
    </source>
</evidence>
<evidence type="ECO:0000305" key="13"/>
<evidence type="ECO:0000305" key="14">
    <source>
    </source>
</evidence>
<evidence type="ECO:0000305" key="15">
    <source>
    </source>
</evidence>
<evidence type="ECO:0000305" key="16">
    <source>
    </source>
</evidence>
<evidence type="ECO:0007744" key="17">
    <source>
        <dbReference type="PDB" id="6B0S"/>
    </source>
</evidence>
<evidence type="ECO:0007744" key="18">
    <source>
        <dbReference type="PDB" id="6O23"/>
    </source>
</evidence>
<evidence type="ECO:0007744" key="19">
    <source>
        <dbReference type="PDB" id="6O24"/>
    </source>
</evidence>
<evidence type="ECO:0007744" key="20">
    <source>
        <dbReference type="PDB" id="6O25"/>
    </source>
</evidence>
<evidence type="ECO:0007744" key="21">
    <source>
        <dbReference type="PDB" id="6O26"/>
    </source>
</evidence>
<evidence type="ECO:0007744" key="22">
    <source>
        <dbReference type="PDB" id="6O28"/>
    </source>
</evidence>
<evidence type="ECO:0007744" key="23">
    <source>
        <dbReference type="PDB" id="6O29"/>
    </source>
</evidence>
<evidence type="ECO:0007744" key="24">
    <source>
        <dbReference type="PDB" id="6O2A"/>
    </source>
</evidence>
<evidence type="ECO:0007744" key="25">
    <source>
        <dbReference type="PDB" id="6O2B"/>
    </source>
</evidence>
<evidence type="ECO:0007744" key="26">
    <source>
        <dbReference type="PDB" id="6O2C"/>
    </source>
</evidence>
<evidence type="ECO:0007744" key="27">
    <source>
        <dbReference type="PDB" id="6ULE"/>
    </source>
</evidence>
<evidence type="ECO:0007744" key="28">
    <source>
        <dbReference type="PDB" id="6ULF"/>
    </source>
</evidence>
<evidence type="ECO:0007829" key="29">
    <source>
        <dbReference type="PDB" id="6B0S"/>
    </source>
</evidence>
<evidence type="ECO:0007829" key="30">
    <source>
        <dbReference type="PDB" id="6O29"/>
    </source>
</evidence>
<evidence type="ECO:0007829" key="31">
    <source>
        <dbReference type="PDB" id="6O2A"/>
    </source>
</evidence>
<evidence type="ECO:0007829" key="32">
    <source>
        <dbReference type="PDB" id="6O2B"/>
    </source>
</evidence>
<evidence type="ECO:0007829" key="33">
    <source>
        <dbReference type="PDB" id="6O2C"/>
    </source>
</evidence>
<evidence type="ECO:0007829" key="34">
    <source>
        <dbReference type="PDB" id="8FA7"/>
    </source>
</evidence>
<comment type="function">
    <text evidence="1 10">Essential sporozoite protein (PubMed:32451496). In the mosquito vector, required for sporozoite development in the oocyst, migration through the vector hemolymph and entry into the vector salivary glands (By similarity). In the vertebrate host, required for sporozoite migration through the host dermis and infection of host hepatocytes (PubMed:32451496). Binds to highly sulfated heparan sulfate proteoglycans (HSPGs) on the surface of host hepatocytes (By similarity).</text>
</comment>
<comment type="function">
    <molecule>Circumsporozoite protein C-terminus</molecule>
    <text evidence="1">In the vertebrate host, binds to highly sulfated heparan sulfate proteoglycans (HSPGs) on the surface of host hepatocytes and is required for sporozoite invasion of the host hepatocytes.</text>
</comment>
<comment type="subcellular location">
    <subcellularLocation>
        <location evidence="7">Cell membrane</location>
        <topology evidence="3">Lipid-anchor</topology>
        <topology evidence="3">GPI-anchor</topology>
    </subcellularLocation>
    <subcellularLocation>
        <location evidence="1">Cytoplasm</location>
    </subcellularLocation>
    <text evidence="1">Localizes to the cytoplasm and the cell membrane in oocysts at day 6 post infection and then gradually distributes over the entire cell surface of the sporoblast and the budding sporozoites.</text>
</comment>
<comment type="developmental stage">
    <text evidence="7">Expressed in sporozoites (at protein level).</text>
</comment>
<comment type="domain">
    <text evidence="1 2">The N-terminus is involved in the initial binding to heparan sulfate proteoglycans (HSPGs) on the surface of host hepatocytes (By similarity). The N-terminus masks the TSP type-1 (TSR) domain which maintains the sporozoites in a migratory state, enabling them to complete their journey to the salivary gland in the mosquito vector and then to the host liver. The unmasking of the TSP type-1 (TSR) domain when the sporozoite interacts with the host hepatocyte also protects sporozoites from host antibodies (By similarity).</text>
</comment>
<comment type="domain">
    <text evidence="1">The TSP type-1 (TSR) domain is required for sporozoite development and invasion. CSP has two conformational states, an adhesive conformation in which the TSP type-1 (TSR) domain is exposed and a nonadhesive conformation in which the TSR is masked by the N-terminus. TSR-exposed conformation occurs during sporozoite development in the oocyst in the mosquito vector and during host hepatocyte invasion. TSR-masked conformation occurs during sporozoite migration through the hemolymph to salivary glands in the mosquito vector and in the host dermis.</text>
</comment>
<comment type="domain">
    <text evidence="1">The GPI-anchor is essential for cell membrane localization and for sporozoite formation inside the oocyst.</text>
</comment>
<comment type="PTM">
    <text evidence="1">During host cell invasion, proteolytically cleaved at the cell membrane in the region I by a papain-like cysteine protease of parasite origin. Cleavage is triggered by the sporozoite contact with highly sulfated heparan sulfate proteoglycans (HSPGs) present on the host hepatocyte cell surface. Cleavage exposes the TSP type-1 (TSR) domain and is required for productive invasion of host hepatocytes but not for adhesion to the host cell membrane. Cleavage is dispensable for sporozoite development in the oocyst, motility and for traversal of host and vector cells.</text>
</comment>
<comment type="PTM">
    <text evidence="7 8">O-glycosylated; maybe by POFUT2.</text>
</comment>
<comment type="polymorphism">
    <text evidence="6">The sequence of the repeats varies across Plasmodium species and strains.</text>
</comment>
<comment type="biotechnology">
    <text evidence="9 10">CSP immunodominant B cell epitopes are primarily located in the central repeats (PubMed:29167197, PubMed:32451496). Antibodies against CSP and particularly against the central repeats can neutralize infection at the pre-liver stage and thus makes CSP an attractive candidate for the development of vaccines (PubMed:32451496). CSP C-terminus is less efficient at eliciting antibodies. These antibodies are less efficient at neutralizing infections (PubMed:29167197, PubMed:32451496).</text>
</comment>
<comment type="similarity">
    <text evidence="13">Belongs to the plasmodium circumsporozoite protein family.</text>
</comment>
<keyword id="KW-0002">3D-structure</keyword>
<keyword id="KW-1003">Cell membrane</keyword>
<keyword id="KW-0963">Cytoplasm</keyword>
<keyword id="KW-1015">Disulfide bond</keyword>
<keyword id="KW-0325">Glycoprotein</keyword>
<keyword id="KW-0336">GPI-anchor</keyword>
<keyword id="KW-0449">Lipoprotein</keyword>
<keyword id="KW-0461">Malaria</keyword>
<keyword id="KW-0472">Membrane</keyword>
<keyword id="KW-0677">Repeat</keyword>
<keyword id="KW-0732">Signal</keyword>
<keyword id="KW-0748">Sporozoite</keyword>
<protein>
    <recommendedName>
        <fullName evidence="11">Circumsporozoite protein</fullName>
        <shortName evidence="11">CS</shortName>
        <shortName evidence="12">PfCSP</shortName>
    </recommendedName>
    <component>
        <recommendedName>
            <fullName evidence="13">Circumsporozoite protein C-terminus</fullName>
        </recommendedName>
    </component>
</protein>
<proteinExistence type="evidence at protein level"/>
<reference key="1">
    <citation type="journal article" date="1989" name="Nucleic Acids Res.">
        <title>DNA sequence of the gene encoding a Plasmodium falciparum malaria candidate vaccine antigen.</title>
        <authorList>
            <person name="Campbell J.R."/>
        </authorList>
    </citation>
    <scope>NUCLEOTIDE SEQUENCE [GENOMIC DNA]</scope>
</reference>
<reference key="2">
    <citation type="submission" date="1997-07" db="EMBL/GenBank/DDBJ databases">
        <authorList>
            <person name="Campbell J.R."/>
        </authorList>
    </citation>
    <scope>SEQUENCE REVISION</scope>
</reference>
<reference key="3">
    <citation type="journal article" date="1992" name="Exp. Parasitol.">
        <title>Plasmodium falciparum: in vitro characterization and human infectivity of a cloned line.</title>
        <authorList>
            <person name="Davis J.R."/>
            <person name="Cortese J.F."/>
            <person name="Herrington D.A."/>
            <person name="Murphy J.R."/>
            <person name="Clyde D.F."/>
            <person name="Thomas A.W."/>
            <person name="Baqar S."/>
            <person name="Cochran M.A."/>
            <person name="Thanassi J."/>
            <person name="Levine M.M."/>
            <person name="Hackett C.S."/>
        </authorList>
    </citation>
    <scope>NUCLEOTIDE SEQUENCE [GENOMIC DNA]</scope>
</reference>
<reference key="4">
    <citation type="journal article" date="1989" name="Mol. Biochem. Parasitol.">
        <title>The circumsporozoite protein gene from NF54, a Plasmodium falciparum isolate used in malaria vaccine trials.</title>
        <authorList>
            <person name="Caspers P."/>
            <person name="Gentz R."/>
            <person name="Matile H."/>
            <person name="Pink J.R."/>
            <person name="Sinigaglia F."/>
        </authorList>
    </citation>
    <scope>NUCLEOTIDE SEQUENCE [GENOMIC DNA]</scope>
    <scope>POLYMORPHISM</scope>
    <scope>REPEATS</scope>
</reference>
<reference key="5">
    <citation type="journal article" date="2016" name="PLoS Pathog.">
        <title>Interrogating the Plasmodium Sporozoite Surface: Identification of Surface-Exposed Proteins and Demonstration of Glycosylation on CSP and TRAP by Mass Spectrometry-Based Proteomics.</title>
        <authorList>
            <person name="Swearingen K.E."/>
            <person name="Lindner S.E."/>
            <person name="Shi L."/>
            <person name="Shears M.J."/>
            <person name="Harupa A."/>
            <person name="Hopp C.S."/>
            <person name="Vaughan A.M."/>
            <person name="Springer T.A."/>
            <person name="Moritz R.L."/>
            <person name="Kappe S.H."/>
            <person name="Sinnis P."/>
        </authorList>
    </citation>
    <scope>SUBCELLULAR LOCATION</scope>
    <scope>DEVELOPMENTAL STAGE</scope>
    <scope>IDENTIFICATION BY MASS SPECTROMETRY</scope>
    <scope>GLYCOSYLATION AT THR-337</scope>
</reference>
<reference key="6">
    <citation type="journal article" date="2017" name="Nat. Commun.">
        <title>Protein O-fucosylation in Plasmodium falciparum ensures efficient infection of mosquito and vertebrate hosts.</title>
        <authorList>
            <person name="Lopaticki S."/>
            <person name="Yang A.S.P."/>
            <person name="John A."/>
            <person name="Scott N.E."/>
            <person name="Lingford J.P."/>
            <person name="O'Neill M.T."/>
            <person name="Erickson S.M."/>
            <person name="McKenzie N.C."/>
            <person name="Jennison C."/>
            <person name="Whitehead L.W."/>
            <person name="Douglas D.N."/>
            <person name="Kneteman N.M."/>
            <person name="Goddard-Borger E.D."/>
            <person name="Boddey J.A."/>
        </authorList>
    </citation>
    <scope>GLYCOSYLATION AT THR-337</scope>
</reference>
<reference evidence="17" key="7">
    <citation type="journal article" date="2018" name="J. Exp. Med.">
        <title>Rare PfCSP C-terminal antibodies induced by live sporozoite vaccination are ineffective against malaria infection.</title>
        <authorList>
            <person name="Scally S.W."/>
            <person name="Murugan R."/>
            <person name="Bosch A."/>
            <person name="Triller G."/>
            <person name="Costa G."/>
            <person name="Mordmuller B."/>
            <person name="Kremsner P.G."/>
            <person name="Sim B.K.L."/>
            <person name="Hoffman S.L."/>
            <person name="Levashina E.A."/>
            <person name="Wardemann H."/>
            <person name="Julien J.P."/>
        </authorList>
    </citation>
    <scope>X-RAY CRYSTALLOGRAPHY (1.95 ANGSTROMS) OF 310-374 IN COMPLEX WITH ANTIBODY 1710</scope>
    <scope>BIOTECHNOLOGY</scope>
</reference>
<reference evidence="18 19 20 21 22 23 24 25 26 27 28" key="8">
    <citation type="journal article" date="2020" name="Nat. Med.">
        <title>Evolution of protective human antibodies against Plasmodium falciparum circumsporozoite protein repeat motifs.</title>
        <authorList>
            <person name="Murugan R."/>
            <person name="Scally S.W."/>
            <person name="Costa G."/>
            <person name="Mustafa G."/>
            <person name="Thai E."/>
            <person name="Decker T."/>
            <person name="Bosch A."/>
            <person name="Prieto K."/>
            <person name="Levashina E.A."/>
            <person name="Julien J.P."/>
            <person name="Wardemann H."/>
        </authorList>
    </citation>
    <scope>X-RAY CRYSTALLOGRAPHY (1.40 ANGSTROMS) OF 261-272 IN COMPLEX WITH ANTIBODIES</scope>
    <scope>FUNCTION</scope>
    <scope>BIOTECHNOLOGY</scope>
</reference>